<gene>
    <name type="primary">MTC6</name>
    <name type="ORF">LELG_02841</name>
</gene>
<proteinExistence type="inferred from homology"/>
<comment type="function">
    <text evidence="1">May be involved in telomere capping.</text>
</comment>
<comment type="subcellular location">
    <subcellularLocation>
        <location evidence="3">Membrane</location>
        <topology evidence="3">Single-pass type I membrane protein</topology>
    </subcellularLocation>
</comment>
<comment type="similarity">
    <text evidence="3">Belongs to the MTC6 family.</text>
</comment>
<reference key="1">
    <citation type="journal article" date="2009" name="Nature">
        <title>Evolution of pathogenicity and sexual reproduction in eight Candida genomes.</title>
        <authorList>
            <person name="Butler G."/>
            <person name="Rasmussen M.D."/>
            <person name="Lin M.F."/>
            <person name="Santos M.A.S."/>
            <person name="Sakthikumar S."/>
            <person name="Munro C.A."/>
            <person name="Rheinbay E."/>
            <person name="Grabherr M."/>
            <person name="Forche A."/>
            <person name="Reedy J.L."/>
            <person name="Agrafioti I."/>
            <person name="Arnaud M.B."/>
            <person name="Bates S."/>
            <person name="Brown A.J.P."/>
            <person name="Brunke S."/>
            <person name="Costanzo M.C."/>
            <person name="Fitzpatrick D.A."/>
            <person name="de Groot P.W.J."/>
            <person name="Harris D."/>
            <person name="Hoyer L.L."/>
            <person name="Hube B."/>
            <person name="Klis F.M."/>
            <person name="Kodira C."/>
            <person name="Lennard N."/>
            <person name="Logue M.E."/>
            <person name="Martin R."/>
            <person name="Neiman A.M."/>
            <person name="Nikolaou E."/>
            <person name="Quail M.A."/>
            <person name="Quinn J."/>
            <person name="Santos M.C."/>
            <person name="Schmitzberger F.F."/>
            <person name="Sherlock G."/>
            <person name="Shah P."/>
            <person name="Silverstein K.A.T."/>
            <person name="Skrzypek M.S."/>
            <person name="Soll D."/>
            <person name="Staggs R."/>
            <person name="Stansfield I."/>
            <person name="Stumpf M.P.H."/>
            <person name="Sudbery P.E."/>
            <person name="Srikantha T."/>
            <person name="Zeng Q."/>
            <person name="Berman J."/>
            <person name="Berriman M."/>
            <person name="Heitman J."/>
            <person name="Gow N.A.R."/>
            <person name="Lorenz M.C."/>
            <person name="Birren B.W."/>
            <person name="Kellis M."/>
            <person name="Cuomo C.A."/>
        </authorList>
    </citation>
    <scope>NUCLEOTIDE SEQUENCE [LARGE SCALE GENOMIC DNA]</scope>
    <source>
        <strain>ATCC 11503 / BCRC 21390 / CBS 2605 / JCM 1781 / NBRC 1676 / NRRL YB-4239</strain>
    </source>
</reference>
<name>MTC6_LODEL</name>
<evidence type="ECO:0000250" key="1"/>
<evidence type="ECO:0000255" key="2"/>
<evidence type="ECO:0000305" key="3"/>
<accession>A5DZQ4</accession>
<organism>
    <name type="scientific">Lodderomyces elongisporus (strain ATCC 11503 / CBS 2605 / JCM 1781 / NBRC 1676 / NRRL YB-4239)</name>
    <name type="common">Yeast</name>
    <name type="synonym">Saccharomyces elongisporus</name>
    <dbReference type="NCBI Taxonomy" id="379508"/>
    <lineage>
        <taxon>Eukaryota</taxon>
        <taxon>Fungi</taxon>
        <taxon>Dikarya</taxon>
        <taxon>Ascomycota</taxon>
        <taxon>Saccharomycotina</taxon>
        <taxon>Pichiomycetes</taxon>
        <taxon>Debaryomycetaceae</taxon>
        <taxon>Candida/Lodderomyces clade</taxon>
        <taxon>Lodderomyces</taxon>
    </lineage>
</organism>
<dbReference type="EMBL" id="CH981526">
    <property type="protein sequence ID" value="EDK44662.1"/>
    <property type="molecule type" value="Genomic_DNA"/>
</dbReference>
<dbReference type="RefSeq" id="XP_001526283.1">
    <property type="nucleotide sequence ID" value="XM_001526233.1"/>
</dbReference>
<dbReference type="FunCoup" id="A5DZQ4">
    <property type="interactions" value="8"/>
</dbReference>
<dbReference type="STRING" id="379508.A5DZQ4"/>
<dbReference type="GlyCosmos" id="A5DZQ4">
    <property type="glycosylation" value="21 sites, No reported glycans"/>
</dbReference>
<dbReference type="GeneID" id="5233371"/>
<dbReference type="KEGG" id="lel:PVL30_003682"/>
<dbReference type="VEuPathDB" id="FungiDB:LELG_02841"/>
<dbReference type="eggNOG" id="ENOG502QVFP">
    <property type="taxonomic scope" value="Eukaryota"/>
</dbReference>
<dbReference type="HOGENOM" id="CLU_033723_0_0_1"/>
<dbReference type="InParanoid" id="A5DZQ4"/>
<dbReference type="OMA" id="EVANCHE"/>
<dbReference type="OrthoDB" id="5573651at2759"/>
<dbReference type="Proteomes" id="UP000001996">
    <property type="component" value="Unassembled WGS sequence"/>
</dbReference>
<dbReference type="GO" id="GO:0016020">
    <property type="term" value="C:membrane"/>
    <property type="evidence" value="ECO:0007669"/>
    <property type="project" value="UniProtKB-SubCell"/>
</dbReference>
<dbReference type="InterPro" id="IPR051008">
    <property type="entry name" value="Telomere_Capping_Maintenance"/>
</dbReference>
<dbReference type="PANTHER" id="PTHR35518:SF2">
    <property type="entry name" value="MAINTENANCE OF TELOMERE CAPPING PROTEIN 6"/>
    <property type="match status" value="1"/>
</dbReference>
<dbReference type="PANTHER" id="PTHR35518">
    <property type="entry name" value="MAINTENANCE OF TELOMOERE CAPPING"/>
    <property type="match status" value="1"/>
</dbReference>
<dbReference type="Pfam" id="PF25506">
    <property type="entry name" value="TIM-barrel_MTC6"/>
    <property type="match status" value="1"/>
</dbReference>
<sequence length="616" mass="70317">MFNLIKIFFLVSLLSKWVFCDESNNSNYNTNTSNTTSNTTSSSISASTINITESINTDVINVAVRTQRDVSKPIPIDQVGVAGISLNSVFDNQGYTADSLAELTNLLQLGTQVVLLTLYWNEFTSVWQLCPAPFPQNVTYYLNSLVNVTWNNNTYLCEYGFTTNDIMDTIFEYLQSSNTVFNVYFMHLLLNLKSIHYEKSNKTIDLENIYAPNSRTNIIGNTTLYDTVAPLSPYIFTPDVLESYQNSEANSTQSNYQQFYAQSNYTFPSLDSVLFLEVKRLLVNVVNNDLVDSRRVYSITLRDRSNIFFNNTMPSTTLDTAEADAFCDRVLNSANDIETFNNLSLYTHFRYVTDNNKKRFTMKGVRRYVKCGLSPVFNASSYQVTNDSFAQTSNQSYYPTANESLLDVEVAFEAFIPYNFWSFAPGQPIMNETTRGNVLSSDANVAYKCVAMNPDGWTVEDCYTEYQYACKNITSPNDWFISTRSRRSYFDIDNDACPDGYNFSLPRLSIEMAALYNVIKKENAEYPVWIDLNDITISTCFVSGGPYAQCPYQKTVTTKKFIRMIAPSSIVALVILFLIFLENLFRKNQLQTNRKKYWKKVLSEHYAKHEQEGVPS</sequence>
<feature type="signal peptide" evidence="2">
    <location>
        <begin position="1"/>
        <end position="20"/>
    </location>
</feature>
<feature type="chain" id="PRO_0000407780" description="Maintenance of telomere capping protein 6">
    <location>
        <begin position="21"/>
        <end position="616"/>
    </location>
</feature>
<feature type="topological domain" description="Extracellular" evidence="2">
    <location>
        <begin position="21"/>
        <end position="564"/>
    </location>
</feature>
<feature type="transmembrane region" description="Helical" evidence="2">
    <location>
        <begin position="565"/>
        <end position="585"/>
    </location>
</feature>
<feature type="topological domain" description="Cytoplasmic" evidence="2">
    <location>
        <begin position="586"/>
        <end position="616"/>
    </location>
</feature>
<feature type="glycosylation site" description="N-linked (GlcNAc...) asparagine" evidence="2">
    <location>
        <position position="24"/>
    </location>
</feature>
<feature type="glycosylation site" description="N-linked (GlcNAc...) asparagine" evidence="2">
    <location>
        <position position="31"/>
    </location>
</feature>
<feature type="glycosylation site" description="N-linked (GlcNAc...) asparagine" evidence="2">
    <location>
        <position position="34"/>
    </location>
</feature>
<feature type="glycosylation site" description="N-linked (GlcNAc...) asparagine" evidence="2">
    <location>
        <position position="38"/>
    </location>
</feature>
<feature type="glycosylation site" description="N-linked (GlcNAc...) asparagine" evidence="2">
    <location>
        <position position="50"/>
    </location>
</feature>
<feature type="glycosylation site" description="N-linked (GlcNAc...) asparagine" evidence="2">
    <location>
        <position position="137"/>
    </location>
</feature>
<feature type="glycosylation site" description="N-linked (GlcNAc...) asparagine" evidence="2">
    <location>
        <position position="147"/>
    </location>
</feature>
<feature type="glycosylation site" description="N-linked (GlcNAc...) asparagine" evidence="2">
    <location>
        <position position="152"/>
    </location>
</feature>
<feature type="glycosylation site" description="N-linked (GlcNAc...) asparagine" evidence="2">
    <location>
        <position position="201"/>
    </location>
</feature>
<feature type="glycosylation site" description="N-linked (GlcNAc...) asparagine" evidence="2">
    <location>
        <position position="221"/>
    </location>
</feature>
<feature type="glycosylation site" description="N-linked (GlcNAc...) asparagine" evidence="2">
    <location>
        <position position="250"/>
    </location>
</feature>
<feature type="glycosylation site" description="N-linked (GlcNAc...) asparagine" evidence="2">
    <location>
        <position position="264"/>
    </location>
</feature>
<feature type="glycosylation site" description="N-linked (GlcNAc...) asparagine" evidence="2">
    <location>
        <position position="310"/>
    </location>
</feature>
<feature type="glycosylation site" description="N-linked (GlcNAc...) asparagine" evidence="2">
    <location>
        <position position="342"/>
    </location>
</feature>
<feature type="glycosylation site" description="N-linked (GlcNAc...) asparagine" evidence="2">
    <location>
        <position position="378"/>
    </location>
</feature>
<feature type="glycosylation site" description="N-linked (GlcNAc...) asparagine" evidence="2">
    <location>
        <position position="386"/>
    </location>
</feature>
<feature type="glycosylation site" description="N-linked (GlcNAc...) asparagine" evidence="2">
    <location>
        <position position="394"/>
    </location>
</feature>
<feature type="glycosylation site" description="N-linked (GlcNAc...) asparagine" evidence="2">
    <location>
        <position position="402"/>
    </location>
</feature>
<feature type="glycosylation site" description="N-linked (GlcNAc...) asparagine" evidence="2">
    <location>
        <position position="431"/>
    </location>
</feature>
<feature type="glycosylation site" description="N-linked (GlcNAc...) asparagine" evidence="2">
    <location>
        <position position="472"/>
    </location>
</feature>
<feature type="glycosylation site" description="N-linked (GlcNAc...) asparagine" evidence="2">
    <location>
        <position position="502"/>
    </location>
</feature>
<keyword id="KW-0325">Glycoprotein</keyword>
<keyword id="KW-0472">Membrane</keyword>
<keyword id="KW-1185">Reference proteome</keyword>
<keyword id="KW-0732">Signal</keyword>
<keyword id="KW-0812">Transmembrane</keyword>
<keyword id="KW-1133">Transmembrane helix</keyword>
<protein>
    <recommendedName>
        <fullName>Maintenance of telomere capping protein 6</fullName>
    </recommendedName>
</protein>